<gene>
    <name type="ORF">UNQ6494/PRO21346</name>
</gene>
<evidence type="ECO:0000255" key="1"/>
<evidence type="ECO:0000256" key="2">
    <source>
        <dbReference type="SAM" id="MobiDB-lite"/>
    </source>
</evidence>
<evidence type="ECO:0000305" key="3"/>
<organism>
    <name type="scientific">Homo sapiens</name>
    <name type="common">Human</name>
    <dbReference type="NCBI Taxonomy" id="9606"/>
    <lineage>
        <taxon>Eukaryota</taxon>
        <taxon>Metazoa</taxon>
        <taxon>Chordata</taxon>
        <taxon>Craniata</taxon>
        <taxon>Vertebrata</taxon>
        <taxon>Euteleostomi</taxon>
        <taxon>Mammalia</taxon>
        <taxon>Eutheria</taxon>
        <taxon>Euarchontoglires</taxon>
        <taxon>Primates</taxon>
        <taxon>Haplorrhini</taxon>
        <taxon>Catarrhini</taxon>
        <taxon>Hominidae</taxon>
        <taxon>Homo</taxon>
    </lineage>
</organism>
<dbReference type="EMBL" id="AY358236">
    <property type="protein sequence ID" value="AAQ88603.1"/>
    <property type="molecule type" value="mRNA"/>
</dbReference>
<dbReference type="SMR" id="Q6UXR6"/>
<dbReference type="BioMuta" id="UNQ6494/PRO21346"/>
<dbReference type="neXtProt" id="NX_Q6UXR6"/>
<dbReference type="InParanoid" id="Q6UXR6"/>
<dbReference type="PAN-GO" id="Q6UXR6">
    <property type="GO annotations" value="0 GO annotations based on evolutionary models"/>
</dbReference>
<dbReference type="Pharos" id="Q6UXR6">
    <property type="development level" value="Tdark"/>
</dbReference>
<dbReference type="Proteomes" id="UP000005640">
    <property type="component" value="Unplaced"/>
</dbReference>
<dbReference type="RNAct" id="Q6UXR6">
    <property type="molecule type" value="protein"/>
</dbReference>
<dbReference type="GO" id="GO:0005576">
    <property type="term" value="C:extracellular region"/>
    <property type="evidence" value="ECO:0007669"/>
    <property type="project" value="UniProtKB-SubCell"/>
</dbReference>
<accession>Q6UXR6</accession>
<name>YI004_HUMAN</name>
<proteinExistence type="uncertain"/>
<reference key="1">
    <citation type="journal article" date="2003" name="Genome Res.">
        <title>The secreted protein discovery initiative (SPDI), a large-scale effort to identify novel human secreted and transmembrane proteins: a bioinformatics assessment.</title>
        <authorList>
            <person name="Clark H.F."/>
            <person name="Gurney A.L."/>
            <person name="Abaya E."/>
            <person name="Baker K."/>
            <person name="Baldwin D.T."/>
            <person name="Brush J."/>
            <person name="Chen J."/>
            <person name="Chow B."/>
            <person name="Chui C."/>
            <person name="Crowley C."/>
            <person name="Currell B."/>
            <person name="Deuel B."/>
            <person name="Dowd P."/>
            <person name="Eaton D."/>
            <person name="Foster J.S."/>
            <person name="Grimaldi C."/>
            <person name="Gu Q."/>
            <person name="Hass P.E."/>
            <person name="Heldens S."/>
            <person name="Huang A."/>
            <person name="Kim H.S."/>
            <person name="Klimowski L."/>
            <person name="Jin Y."/>
            <person name="Johnson S."/>
            <person name="Lee J."/>
            <person name="Lewis L."/>
            <person name="Liao D."/>
            <person name="Mark M.R."/>
            <person name="Robbie E."/>
            <person name="Sanchez C."/>
            <person name="Schoenfeld J."/>
            <person name="Seshagiri S."/>
            <person name="Simmons L."/>
            <person name="Singh J."/>
            <person name="Smith V."/>
            <person name="Stinson J."/>
            <person name="Vagts A."/>
            <person name="Vandlen R.L."/>
            <person name="Watanabe C."/>
            <person name="Wieand D."/>
            <person name="Woods K."/>
            <person name="Xie M.-H."/>
            <person name="Yansura D.G."/>
            <person name="Yi S."/>
            <person name="Yu G."/>
            <person name="Yuan J."/>
            <person name="Zhang M."/>
            <person name="Zhang Z."/>
            <person name="Goddard A.D."/>
            <person name="Wood W.I."/>
            <person name="Godowski P.J."/>
            <person name="Gray A.M."/>
        </authorList>
    </citation>
    <scope>NUCLEOTIDE SEQUENCE [LARGE SCALE MRNA]</scope>
</reference>
<keyword id="KW-1185">Reference proteome</keyword>
<keyword id="KW-0964">Secreted</keyword>
<keyword id="KW-0732">Signal</keyword>
<comment type="subcellular location">
    <subcellularLocation>
        <location evidence="3">Secreted</location>
    </subcellularLocation>
</comment>
<comment type="caution">
    <text evidence="3">Product of a dubious CDS prediction.</text>
</comment>
<protein>
    <recommendedName>
        <fullName>Putative uncharacterized protein UNQ6494/PRO21346</fullName>
    </recommendedName>
</protein>
<feature type="signal peptide" evidence="1">
    <location>
        <begin position="1"/>
        <end position="29"/>
    </location>
</feature>
<feature type="chain" id="PRO_0000317716" description="Putative uncharacterized protein UNQ6494/PRO21346">
    <location>
        <begin position="30"/>
        <end position="183"/>
    </location>
</feature>
<feature type="region of interest" description="Disordered" evidence="2">
    <location>
        <begin position="149"/>
        <end position="183"/>
    </location>
</feature>
<feature type="compositionally biased region" description="Basic and acidic residues" evidence="2">
    <location>
        <begin position="167"/>
        <end position="183"/>
    </location>
</feature>
<sequence>MQCWQQPFLRFLQQPFFLATASLAGSSSSFNVLIPKRDEDGDGEGPGDVTAGVSRAAGSPSGWEAPWVQQPRCCRRATPVCCAGQGPPRSLQQGGSEVLLGQLCSPEPDWLPSSGPKVAKQVFQVAAELLQHPEHFVPSSVPEGCVHKPGSTCDGSLKGRAYPSCVPKRDPEHSREESHPLSG</sequence>